<proteinExistence type="inferred from homology"/>
<geneLocation type="chloroplast"/>
<keyword id="KW-0004">4Fe-4S</keyword>
<keyword id="KW-0150">Chloroplast</keyword>
<keyword id="KW-0408">Iron</keyword>
<keyword id="KW-0411">Iron-sulfur</keyword>
<keyword id="KW-0472">Membrane</keyword>
<keyword id="KW-0479">Metal-binding</keyword>
<keyword id="KW-0520">NAD</keyword>
<keyword id="KW-0521">NADP</keyword>
<keyword id="KW-0934">Plastid</keyword>
<keyword id="KW-0618">Plastoquinone</keyword>
<keyword id="KW-0874">Quinone</keyword>
<keyword id="KW-0793">Thylakoid</keyword>
<keyword id="KW-1278">Translocase</keyword>
<keyword id="KW-0813">Transport</keyword>
<evidence type="ECO:0000255" key="1">
    <source>
        <dbReference type="HAMAP-Rule" id="MF_01356"/>
    </source>
</evidence>
<accession>P52766</accession>
<sequence>MNSIEFPLRDRTTQNSVISTTLNELSNWSRLSSLWPLLYGTSCCFIEFASLIGSRFDFDRYGLVPRSSPRQADLILTAGTVTMKMAPSLVRLYEQMPEPKYVIAIGACTITGGMFSTDSYSTVRGVDKLIPVDVYLPGCPPKPEAVIDAITKLRKKISREIYEKQIRSQRENKNRFFTTNHKFHVGRSTQTGNYDQGFFFQPPSTSEISLTHFSNIKKRVQYPPTK</sequence>
<name>NDHK_LUPLU</name>
<reference key="1">
    <citation type="journal article" date="1997" name="Plant Sci.">
        <title>Cloning and transcription analysis of the ndhC - ndhK - ndhJ genes of lupin plastid DNA.</title>
        <authorList>
            <person name="Oczkowski M."/>
            <person name="Paszkiewicz J.M."/>
            <person name="Piatyszek M."/>
            <person name="Augustyniak H."/>
        </authorList>
    </citation>
    <scope>NUCLEOTIDE SEQUENCE [GENOMIC DNA]</scope>
    <source>
        <strain>cv. Topaz</strain>
        <tissue>Leaf</tissue>
    </source>
</reference>
<feature type="chain" id="PRO_0000118745" description="NAD(P)H-quinone oxidoreductase subunit K, chloroplastic">
    <location>
        <begin position="1"/>
        <end position="226"/>
    </location>
</feature>
<feature type="binding site" evidence="1">
    <location>
        <position position="43"/>
    </location>
    <ligand>
        <name>[4Fe-4S] cluster</name>
        <dbReference type="ChEBI" id="CHEBI:49883"/>
    </ligand>
</feature>
<feature type="binding site" evidence="1">
    <location>
        <position position="44"/>
    </location>
    <ligand>
        <name>[4Fe-4S] cluster</name>
        <dbReference type="ChEBI" id="CHEBI:49883"/>
    </ligand>
</feature>
<feature type="binding site" evidence="1">
    <location>
        <position position="108"/>
    </location>
    <ligand>
        <name>[4Fe-4S] cluster</name>
        <dbReference type="ChEBI" id="CHEBI:49883"/>
    </ligand>
</feature>
<feature type="binding site" evidence="1">
    <location>
        <position position="139"/>
    </location>
    <ligand>
        <name>[4Fe-4S] cluster</name>
        <dbReference type="ChEBI" id="CHEBI:49883"/>
    </ligand>
</feature>
<protein>
    <recommendedName>
        <fullName evidence="1">NAD(P)H-quinone oxidoreductase subunit K, chloroplastic</fullName>
        <ecNumber evidence="1">7.1.1.-</ecNumber>
    </recommendedName>
    <alternativeName>
        <fullName evidence="1">NAD(P)H dehydrogenase subunit K</fullName>
    </alternativeName>
    <alternativeName>
        <fullName evidence="1">NADH-plastoquinone oxidoreductase subunit K</fullName>
    </alternativeName>
</protein>
<organism>
    <name type="scientific">Lupinus luteus</name>
    <name type="common">European yellow lupine</name>
    <dbReference type="NCBI Taxonomy" id="3873"/>
    <lineage>
        <taxon>Eukaryota</taxon>
        <taxon>Viridiplantae</taxon>
        <taxon>Streptophyta</taxon>
        <taxon>Embryophyta</taxon>
        <taxon>Tracheophyta</taxon>
        <taxon>Spermatophyta</taxon>
        <taxon>Magnoliopsida</taxon>
        <taxon>eudicotyledons</taxon>
        <taxon>Gunneridae</taxon>
        <taxon>Pentapetalae</taxon>
        <taxon>rosids</taxon>
        <taxon>fabids</taxon>
        <taxon>Fabales</taxon>
        <taxon>Fabaceae</taxon>
        <taxon>Papilionoideae</taxon>
        <taxon>50 kb inversion clade</taxon>
        <taxon>genistoids sensu lato</taxon>
        <taxon>core genistoids</taxon>
        <taxon>Genisteae</taxon>
        <taxon>Lupinus</taxon>
    </lineage>
</organism>
<gene>
    <name evidence="1" type="primary">ndhK</name>
</gene>
<comment type="function">
    <text evidence="1">NDH shuttles electrons from NAD(P)H:plastoquinone, via FMN and iron-sulfur (Fe-S) centers, to quinones in the photosynthetic chain and possibly in a chloroplast respiratory chain. The immediate electron acceptor for the enzyme in this species is believed to be plastoquinone. Couples the redox reaction to proton translocation, and thus conserves the redox energy in a proton gradient.</text>
</comment>
<comment type="catalytic activity">
    <reaction evidence="1">
        <text>a plastoquinone + NADH + (n+1) H(+)(in) = a plastoquinol + NAD(+) + n H(+)(out)</text>
        <dbReference type="Rhea" id="RHEA:42608"/>
        <dbReference type="Rhea" id="RHEA-COMP:9561"/>
        <dbReference type="Rhea" id="RHEA-COMP:9562"/>
        <dbReference type="ChEBI" id="CHEBI:15378"/>
        <dbReference type="ChEBI" id="CHEBI:17757"/>
        <dbReference type="ChEBI" id="CHEBI:57540"/>
        <dbReference type="ChEBI" id="CHEBI:57945"/>
        <dbReference type="ChEBI" id="CHEBI:62192"/>
    </reaction>
</comment>
<comment type="catalytic activity">
    <reaction evidence="1">
        <text>a plastoquinone + NADPH + (n+1) H(+)(in) = a plastoquinol + NADP(+) + n H(+)(out)</text>
        <dbReference type="Rhea" id="RHEA:42612"/>
        <dbReference type="Rhea" id="RHEA-COMP:9561"/>
        <dbReference type="Rhea" id="RHEA-COMP:9562"/>
        <dbReference type="ChEBI" id="CHEBI:15378"/>
        <dbReference type="ChEBI" id="CHEBI:17757"/>
        <dbReference type="ChEBI" id="CHEBI:57783"/>
        <dbReference type="ChEBI" id="CHEBI:58349"/>
        <dbReference type="ChEBI" id="CHEBI:62192"/>
    </reaction>
</comment>
<comment type="cofactor">
    <cofactor evidence="1">
        <name>[4Fe-4S] cluster</name>
        <dbReference type="ChEBI" id="CHEBI:49883"/>
    </cofactor>
    <text evidence="1">Binds 1 [4Fe-4S] cluster.</text>
</comment>
<comment type="subunit">
    <text evidence="1">NDH is composed of at least 16 different subunits, 5 of which are encoded in the nucleus.</text>
</comment>
<comment type="subcellular location">
    <subcellularLocation>
        <location evidence="1">Plastid</location>
        <location evidence="1">Chloroplast thylakoid membrane</location>
        <topology evidence="1">Peripheral membrane protein</topology>
        <orientation evidence="1">Stromal side</orientation>
    </subcellularLocation>
</comment>
<comment type="similarity">
    <text evidence="1">Belongs to the complex I 20 kDa subunit family.</text>
</comment>
<dbReference type="EC" id="7.1.1.-" evidence="1"/>
<dbReference type="EMBL" id="U27654">
    <property type="protein sequence ID" value="AAB86906.1"/>
    <property type="molecule type" value="Genomic_DNA"/>
</dbReference>
<dbReference type="PIR" id="T09637">
    <property type="entry name" value="T09637"/>
</dbReference>
<dbReference type="SMR" id="P52766"/>
<dbReference type="GO" id="GO:0009535">
    <property type="term" value="C:chloroplast thylakoid membrane"/>
    <property type="evidence" value="ECO:0007669"/>
    <property type="project" value="UniProtKB-SubCell"/>
</dbReference>
<dbReference type="GO" id="GO:0045271">
    <property type="term" value="C:respiratory chain complex I"/>
    <property type="evidence" value="ECO:0007669"/>
    <property type="project" value="TreeGrafter"/>
</dbReference>
<dbReference type="GO" id="GO:0051539">
    <property type="term" value="F:4 iron, 4 sulfur cluster binding"/>
    <property type="evidence" value="ECO:0007669"/>
    <property type="project" value="UniProtKB-KW"/>
</dbReference>
<dbReference type="GO" id="GO:0005506">
    <property type="term" value="F:iron ion binding"/>
    <property type="evidence" value="ECO:0007669"/>
    <property type="project" value="UniProtKB-UniRule"/>
</dbReference>
<dbReference type="GO" id="GO:0008137">
    <property type="term" value="F:NADH dehydrogenase (ubiquinone) activity"/>
    <property type="evidence" value="ECO:0007669"/>
    <property type="project" value="InterPro"/>
</dbReference>
<dbReference type="GO" id="GO:0048038">
    <property type="term" value="F:quinone binding"/>
    <property type="evidence" value="ECO:0007669"/>
    <property type="project" value="UniProtKB-KW"/>
</dbReference>
<dbReference type="GO" id="GO:0009060">
    <property type="term" value="P:aerobic respiration"/>
    <property type="evidence" value="ECO:0007669"/>
    <property type="project" value="TreeGrafter"/>
</dbReference>
<dbReference type="GO" id="GO:0015990">
    <property type="term" value="P:electron transport coupled proton transport"/>
    <property type="evidence" value="ECO:0007669"/>
    <property type="project" value="TreeGrafter"/>
</dbReference>
<dbReference type="GO" id="GO:0019684">
    <property type="term" value="P:photosynthesis, light reaction"/>
    <property type="evidence" value="ECO:0007669"/>
    <property type="project" value="UniProtKB-UniRule"/>
</dbReference>
<dbReference type="FunFam" id="3.40.50.12280:FF:000003">
    <property type="entry name" value="NAD(P)H-quinone oxidoreductase subunit K, chloroplastic"/>
    <property type="match status" value="1"/>
</dbReference>
<dbReference type="Gene3D" id="3.40.50.12280">
    <property type="match status" value="1"/>
</dbReference>
<dbReference type="HAMAP" id="MF_01356">
    <property type="entry name" value="NDH1_NuoB"/>
    <property type="match status" value="1"/>
</dbReference>
<dbReference type="InterPro" id="IPR006137">
    <property type="entry name" value="NADH_UbQ_OxRdtase-like_20kDa"/>
</dbReference>
<dbReference type="InterPro" id="IPR006138">
    <property type="entry name" value="NADH_UQ_OxRdtase_20Kd_su"/>
</dbReference>
<dbReference type="NCBIfam" id="TIGR01957">
    <property type="entry name" value="nuoB_fam"/>
    <property type="match status" value="1"/>
</dbReference>
<dbReference type="NCBIfam" id="NF005012">
    <property type="entry name" value="PRK06411.1"/>
    <property type="match status" value="1"/>
</dbReference>
<dbReference type="PANTHER" id="PTHR11995">
    <property type="entry name" value="NADH DEHYDROGENASE"/>
    <property type="match status" value="1"/>
</dbReference>
<dbReference type="PANTHER" id="PTHR11995:SF14">
    <property type="entry name" value="NADH DEHYDROGENASE [UBIQUINONE] IRON-SULFUR PROTEIN 7, MITOCHONDRIAL"/>
    <property type="match status" value="1"/>
</dbReference>
<dbReference type="Pfam" id="PF01058">
    <property type="entry name" value="Oxidored_q6"/>
    <property type="match status" value="1"/>
</dbReference>
<dbReference type="SUPFAM" id="SSF56770">
    <property type="entry name" value="HydA/Nqo6-like"/>
    <property type="match status" value="1"/>
</dbReference>
<dbReference type="PROSITE" id="PS01150">
    <property type="entry name" value="COMPLEX1_20K"/>
    <property type="match status" value="1"/>
</dbReference>